<evidence type="ECO:0000255" key="1">
    <source>
        <dbReference type="HAMAP-Rule" id="MF_00123"/>
    </source>
</evidence>
<gene>
    <name evidence="1" type="primary">argS</name>
    <name type="ordered locus">Patl_1359</name>
</gene>
<comment type="catalytic activity">
    <reaction evidence="1">
        <text>tRNA(Arg) + L-arginine + ATP = L-arginyl-tRNA(Arg) + AMP + diphosphate</text>
        <dbReference type="Rhea" id="RHEA:20301"/>
        <dbReference type="Rhea" id="RHEA-COMP:9658"/>
        <dbReference type="Rhea" id="RHEA-COMP:9673"/>
        <dbReference type="ChEBI" id="CHEBI:30616"/>
        <dbReference type="ChEBI" id="CHEBI:32682"/>
        <dbReference type="ChEBI" id="CHEBI:33019"/>
        <dbReference type="ChEBI" id="CHEBI:78442"/>
        <dbReference type="ChEBI" id="CHEBI:78513"/>
        <dbReference type="ChEBI" id="CHEBI:456215"/>
        <dbReference type="EC" id="6.1.1.19"/>
    </reaction>
</comment>
<comment type="subunit">
    <text evidence="1">Monomer.</text>
</comment>
<comment type="subcellular location">
    <subcellularLocation>
        <location evidence="1">Cytoplasm</location>
    </subcellularLocation>
</comment>
<comment type="similarity">
    <text evidence="1">Belongs to the class-I aminoacyl-tRNA synthetase family.</text>
</comment>
<keyword id="KW-0030">Aminoacyl-tRNA synthetase</keyword>
<keyword id="KW-0067">ATP-binding</keyword>
<keyword id="KW-0963">Cytoplasm</keyword>
<keyword id="KW-0436">Ligase</keyword>
<keyword id="KW-0547">Nucleotide-binding</keyword>
<keyword id="KW-0648">Protein biosynthesis</keyword>
<name>SYR_PSEA6</name>
<accession>Q15W53</accession>
<reference key="1">
    <citation type="submission" date="2006-06" db="EMBL/GenBank/DDBJ databases">
        <title>Complete sequence of Pseudoalteromonas atlantica T6c.</title>
        <authorList>
            <consortium name="US DOE Joint Genome Institute"/>
            <person name="Copeland A."/>
            <person name="Lucas S."/>
            <person name="Lapidus A."/>
            <person name="Barry K."/>
            <person name="Detter J.C."/>
            <person name="Glavina del Rio T."/>
            <person name="Hammon N."/>
            <person name="Israni S."/>
            <person name="Dalin E."/>
            <person name="Tice H."/>
            <person name="Pitluck S."/>
            <person name="Saunders E."/>
            <person name="Brettin T."/>
            <person name="Bruce D."/>
            <person name="Han C."/>
            <person name="Tapia R."/>
            <person name="Gilna P."/>
            <person name="Schmutz J."/>
            <person name="Larimer F."/>
            <person name="Land M."/>
            <person name="Hauser L."/>
            <person name="Kyrpides N."/>
            <person name="Kim E."/>
            <person name="Karls A.C."/>
            <person name="Bartlett D."/>
            <person name="Higgins B.P."/>
            <person name="Richardson P."/>
        </authorList>
    </citation>
    <scope>NUCLEOTIDE SEQUENCE [LARGE SCALE GENOMIC DNA]</scope>
    <source>
        <strain>T6c / ATCC BAA-1087</strain>
    </source>
</reference>
<protein>
    <recommendedName>
        <fullName evidence="1">Arginine--tRNA ligase</fullName>
        <ecNumber evidence="1">6.1.1.19</ecNumber>
    </recommendedName>
    <alternativeName>
        <fullName evidence="1">Arginyl-tRNA synthetase</fullName>
        <shortName evidence="1">ArgRS</shortName>
    </alternativeName>
</protein>
<feature type="chain" id="PRO_1000018089" description="Arginine--tRNA ligase">
    <location>
        <begin position="1"/>
        <end position="578"/>
    </location>
</feature>
<feature type="short sequence motif" description="'HIGH' region">
    <location>
        <begin position="122"/>
        <end position="132"/>
    </location>
</feature>
<organism>
    <name type="scientific">Pseudoalteromonas atlantica (strain T6c / ATCC BAA-1087)</name>
    <dbReference type="NCBI Taxonomy" id="3042615"/>
    <lineage>
        <taxon>Bacteria</taxon>
        <taxon>Pseudomonadati</taxon>
        <taxon>Pseudomonadota</taxon>
        <taxon>Gammaproteobacteria</taxon>
        <taxon>Alteromonadales</taxon>
        <taxon>Alteromonadaceae</taxon>
        <taxon>Paraglaciecola</taxon>
    </lineage>
</organism>
<sequence>MNLHTLLLNKFRTALVAIGAPENSPAPLSRATKVGFGDYQFNGAMALAKVLKQKPRDIAEKIVEAVELDGIAEKLEVAGPGFINIYLSKEWLAAQLSHAAADPRLNIESQPTKTVVVDYSSPNLAKEMHVGHLRTTIIGDAVVKALEFMGHKVIRQNHMGDWGTQFGMLLAHLNDKLESNQVAETALSDLEDFYREAKVRFDEEEGFADRAREYVVKLQGGDSHCLALWQNFIDVSITHSEEVYHKLNVSLTRDDIMGESAYNHDLANVVSELQAKGLAVESQGAQVVFLPELADKEGNPAAYIVQKSGGGYLYATTDLAAIRHRNKQLHADRTLILTDARQALHFKQTELVARKAGFIEPEQTYEHCPFGMMLGNDGRPFKTRTGGTVKLVELLDEAVERAETLLSKRETDLSSDELKVLANKIGIGAVKYADLSKNRTTDYMFSWDSMLSFEGNTAPYLQYAYTRVMSIFRKAGVDHQTLNAPISLDAPQEKILAVKQLQYVEAINQVIAEGTPHVLCTYLYELASLFMSFYEACPMLKDGIEQDVRDSRMTLAALTAKTLQSGLSLLGIDTMERM</sequence>
<proteinExistence type="inferred from homology"/>
<dbReference type="EC" id="6.1.1.19" evidence="1"/>
<dbReference type="EMBL" id="CP000388">
    <property type="protein sequence ID" value="ABG39885.1"/>
    <property type="molecule type" value="Genomic_DNA"/>
</dbReference>
<dbReference type="RefSeq" id="WP_011574204.1">
    <property type="nucleotide sequence ID" value="NC_008228.1"/>
</dbReference>
<dbReference type="SMR" id="Q15W53"/>
<dbReference type="STRING" id="342610.Patl_1359"/>
<dbReference type="KEGG" id="pat:Patl_1359"/>
<dbReference type="eggNOG" id="COG0018">
    <property type="taxonomic scope" value="Bacteria"/>
</dbReference>
<dbReference type="HOGENOM" id="CLU_006406_5_1_6"/>
<dbReference type="OrthoDB" id="9803211at2"/>
<dbReference type="Proteomes" id="UP000001981">
    <property type="component" value="Chromosome"/>
</dbReference>
<dbReference type="GO" id="GO:0005737">
    <property type="term" value="C:cytoplasm"/>
    <property type="evidence" value="ECO:0007669"/>
    <property type="project" value="UniProtKB-SubCell"/>
</dbReference>
<dbReference type="GO" id="GO:0004814">
    <property type="term" value="F:arginine-tRNA ligase activity"/>
    <property type="evidence" value="ECO:0007669"/>
    <property type="project" value="UniProtKB-UniRule"/>
</dbReference>
<dbReference type="GO" id="GO:0005524">
    <property type="term" value="F:ATP binding"/>
    <property type="evidence" value="ECO:0007669"/>
    <property type="project" value="UniProtKB-UniRule"/>
</dbReference>
<dbReference type="GO" id="GO:0006420">
    <property type="term" value="P:arginyl-tRNA aminoacylation"/>
    <property type="evidence" value="ECO:0007669"/>
    <property type="project" value="UniProtKB-UniRule"/>
</dbReference>
<dbReference type="CDD" id="cd07956">
    <property type="entry name" value="Anticodon_Ia_Arg"/>
    <property type="match status" value="1"/>
</dbReference>
<dbReference type="CDD" id="cd00671">
    <property type="entry name" value="ArgRS_core"/>
    <property type="match status" value="1"/>
</dbReference>
<dbReference type="FunFam" id="3.40.50.620:FF:000030">
    <property type="entry name" value="Arginine--tRNA ligase"/>
    <property type="match status" value="1"/>
</dbReference>
<dbReference type="FunFam" id="1.10.730.10:FF:000006">
    <property type="entry name" value="Arginyl-tRNA synthetase 2, mitochondrial"/>
    <property type="match status" value="1"/>
</dbReference>
<dbReference type="Gene3D" id="3.30.1360.70">
    <property type="entry name" value="Arginyl tRNA synthetase N-terminal domain"/>
    <property type="match status" value="1"/>
</dbReference>
<dbReference type="Gene3D" id="3.40.50.620">
    <property type="entry name" value="HUPs"/>
    <property type="match status" value="1"/>
</dbReference>
<dbReference type="Gene3D" id="1.10.730.10">
    <property type="entry name" value="Isoleucyl-tRNA Synthetase, Domain 1"/>
    <property type="match status" value="1"/>
</dbReference>
<dbReference type="HAMAP" id="MF_00123">
    <property type="entry name" value="Arg_tRNA_synth"/>
    <property type="match status" value="1"/>
</dbReference>
<dbReference type="InterPro" id="IPR001412">
    <property type="entry name" value="aa-tRNA-synth_I_CS"/>
</dbReference>
<dbReference type="InterPro" id="IPR001278">
    <property type="entry name" value="Arg-tRNA-ligase"/>
</dbReference>
<dbReference type="InterPro" id="IPR005148">
    <property type="entry name" value="Arg-tRNA-synth_N"/>
</dbReference>
<dbReference type="InterPro" id="IPR036695">
    <property type="entry name" value="Arg-tRNA-synth_N_sf"/>
</dbReference>
<dbReference type="InterPro" id="IPR035684">
    <property type="entry name" value="ArgRS_core"/>
</dbReference>
<dbReference type="InterPro" id="IPR008909">
    <property type="entry name" value="DALR_anticod-bd"/>
</dbReference>
<dbReference type="InterPro" id="IPR014729">
    <property type="entry name" value="Rossmann-like_a/b/a_fold"/>
</dbReference>
<dbReference type="InterPro" id="IPR009080">
    <property type="entry name" value="tRNAsynth_Ia_anticodon-bd"/>
</dbReference>
<dbReference type="NCBIfam" id="TIGR00456">
    <property type="entry name" value="argS"/>
    <property type="match status" value="1"/>
</dbReference>
<dbReference type="PANTHER" id="PTHR11956:SF5">
    <property type="entry name" value="ARGININE--TRNA LIGASE, CYTOPLASMIC"/>
    <property type="match status" value="1"/>
</dbReference>
<dbReference type="PANTHER" id="PTHR11956">
    <property type="entry name" value="ARGINYL-TRNA SYNTHETASE"/>
    <property type="match status" value="1"/>
</dbReference>
<dbReference type="Pfam" id="PF03485">
    <property type="entry name" value="Arg_tRNA_synt_N"/>
    <property type="match status" value="1"/>
</dbReference>
<dbReference type="Pfam" id="PF05746">
    <property type="entry name" value="DALR_1"/>
    <property type="match status" value="1"/>
</dbReference>
<dbReference type="Pfam" id="PF00750">
    <property type="entry name" value="tRNA-synt_1d"/>
    <property type="match status" value="1"/>
</dbReference>
<dbReference type="PRINTS" id="PR01038">
    <property type="entry name" value="TRNASYNTHARG"/>
</dbReference>
<dbReference type="SMART" id="SM01016">
    <property type="entry name" value="Arg_tRNA_synt_N"/>
    <property type="match status" value="1"/>
</dbReference>
<dbReference type="SMART" id="SM00836">
    <property type="entry name" value="DALR_1"/>
    <property type="match status" value="1"/>
</dbReference>
<dbReference type="SUPFAM" id="SSF47323">
    <property type="entry name" value="Anticodon-binding domain of a subclass of class I aminoacyl-tRNA synthetases"/>
    <property type="match status" value="1"/>
</dbReference>
<dbReference type="SUPFAM" id="SSF55190">
    <property type="entry name" value="Arginyl-tRNA synthetase (ArgRS), N-terminal 'additional' domain"/>
    <property type="match status" value="1"/>
</dbReference>
<dbReference type="SUPFAM" id="SSF52374">
    <property type="entry name" value="Nucleotidylyl transferase"/>
    <property type="match status" value="1"/>
</dbReference>
<dbReference type="PROSITE" id="PS00178">
    <property type="entry name" value="AA_TRNA_LIGASE_I"/>
    <property type="match status" value="1"/>
</dbReference>